<protein>
    <recommendedName>
        <fullName evidence="1">Triosephosphate isomerase</fullName>
        <shortName evidence="1">TIM</shortName>
        <shortName evidence="1">TPI</shortName>
        <ecNumber evidence="1">5.3.1.1</ecNumber>
    </recommendedName>
    <alternativeName>
        <fullName evidence="1">Triose-phosphate isomerase</fullName>
    </alternativeName>
</protein>
<name>TPIS_BACVZ</name>
<sequence>MRKPIIAGNWKMNKTLGEAVSFVEEVKSSIPAADKAEAVVCAPALFLEKLTSAVKGTDLKVGAQNMHFEENGAFTGEISPVALKDLGVDYCVIGHSERREMFAETDETVNKKAHAAFKHGIVPIICVGETLEEREAGKTNDLVADQVKKGLAGLSEEQVAASVIAYEPIWAIGTGKSSTAKDANDVCAHIRKVVAESFSQETADKLRIQYGGSVKPANIKEYMAESDIDGALVGGASLEPQSFVQLLEEGQYE</sequence>
<dbReference type="EC" id="5.3.1.1" evidence="1"/>
<dbReference type="EMBL" id="CP000560">
    <property type="protein sequence ID" value="ABS75459.1"/>
    <property type="molecule type" value="Genomic_DNA"/>
</dbReference>
<dbReference type="RefSeq" id="WP_003151618.1">
    <property type="nucleotide sequence ID" value="NC_009725.2"/>
</dbReference>
<dbReference type="SMR" id="A7Z8Y3"/>
<dbReference type="GeneID" id="93082272"/>
<dbReference type="KEGG" id="bay:RBAM_031280"/>
<dbReference type="HOGENOM" id="CLU_024251_2_3_9"/>
<dbReference type="UniPathway" id="UPA00109">
    <property type="reaction ID" value="UER00189"/>
</dbReference>
<dbReference type="UniPathway" id="UPA00138"/>
<dbReference type="Proteomes" id="UP000001120">
    <property type="component" value="Chromosome"/>
</dbReference>
<dbReference type="GO" id="GO:0005829">
    <property type="term" value="C:cytosol"/>
    <property type="evidence" value="ECO:0007669"/>
    <property type="project" value="TreeGrafter"/>
</dbReference>
<dbReference type="GO" id="GO:0004807">
    <property type="term" value="F:triose-phosphate isomerase activity"/>
    <property type="evidence" value="ECO:0007669"/>
    <property type="project" value="UniProtKB-UniRule"/>
</dbReference>
<dbReference type="GO" id="GO:0006094">
    <property type="term" value="P:gluconeogenesis"/>
    <property type="evidence" value="ECO:0007669"/>
    <property type="project" value="UniProtKB-UniRule"/>
</dbReference>
<dbReference type="GO" id="GO:0046166">
    <property type="term" value="P:glyceraldehyde-3-phosphate biosynthetic process"/>
    <property type="evidence" value="ECO:0007669"/>
    <property type="project" value="TreeGrafter"/>
</dbReference>
<dbReference type="GO" id="GO:0019563">
    <property type="term" value="P:glycerol catabolic process"/>
    <property type="evidence" value="ECO:0007669"/>
    <property type="project" value="TreeGrafter"/>
</dbReference>
<dbReference type="GO" id="GO:0006096">
    <property type="term" value="P:glycolytic process"/>
    <property type="evidence" value="ECO:0007669"/>
    <property type="project" value="UniProtKB-UniRule"/>
</dbReference>
<dbReference type="CDD" id="cd00311">
    <property type="entry name" value="TIM"/>
    <property type="match status" value="1"/>
</dbReference>
<dbReference type="FunFam" id="3.20.20.70:FF:000016">
    <property type="entry name" value="Triosephosphate isomerase"/>
    <property type="match status" value="1"/>
</dbReference>
<dbReference type="Gene3D" id="3.20.20.70">
    <property type="entry name" value="Aldolase class I"/>
    <property type="match status" value="1"/>
</dbReference>
<dbReference type="HAMAP" id="MF_00147_B">
    <property type="entry name" value="TIM_B"/>
    <property type="match status" value="1"/>
</dbReference>
<dbReference type="InterPro" id="IPR013785">
    <property type="entry name" value="Aldolase_TIM"/>
</dbReference>
<dbReference type="InterPro" id="IPR035990">
    <property type="entry name" value="TIM_sf"/>
</dbReference>
<dbReference type="InterPro" id="IPR022896">
    <property type="entry name" value="TrioseP_Isoase_bac/euk"/>
</dbReference>
<dbReference type="InterPro" id="IPR000652">
    <property type="entry name" value="Triosephosphate_isomerase"/>
</dbReference>
<dbReference type="InterPro" id="IPR020861">
    <property type="entry name" value="Triosephosphate_isomerase_AS"/>
</dbReference>
<dbReference type="NCBIfam" id="TIGR00419">
    <property type="entry name" value="tim"/>
    <property type="match status" value="1"/>
</dbReference>
<dbReference type="PANTHER" id="PTHR21139">
    <property type="entry name" value="TRIOSEPHOSPHATE ISOMERASE"/>
    <property type="match status" value="1"/>
</dbReference>
<dbReference type="PANTHER" id="PTHR21139:SF42">
    <property type="entry name" value="TRIOSEPHOSPHATE ISOMERASE"/>
    <property type="match status" value="1"/>
</dbReference>
<dbReference type="Pfam" id="PF00121">
    <property type="entry name" value="TIM"/>
    <property type="match status" value="1"/>
</dbReference>
<dbReference type="SUPFAM" id="SSF51351">
    <property type="entry name" value="Triosephosphate isomerase (TIM)"/>
    <property type="match status" value="1"/>
</dbReference>
<dbReference type="PROSITE" id="PS00171">
    <property type="entry name" value="TIM_1"/>
    <property type="match status" value="1"/>
</dbReference>
<dbReference type="PROSITE" id="PS51440">
    <property type="entry name" value="TIM_2"/>
    <property type="match status" value="1"/>
</dbReference>
<feature type="chain" id="PRO_1000009839" description="Triosephosphate isomerase">
    <location>
        <begin position="1"/>
        <end position="253"/>
    </location>
</feature>
<feature type="active site" description="Electrophile" evidence="1">
    <location>
        <position position="95"/>
    </location>
</feature>
<feature type="active site" description="Proton acceptor" evidence="1">
    <location>
        <position position="167"/>
    </location>
</feature>
<feature type="binding site" evidence="1">
    <location>
        <begin position="9"/>
        <end position="11"/>
    </location>
    <ligand>
        <name>substrate</name>
    </ligand>
</feature>
<feature type="binding site" evidence="1">
    <location>
        <position position="173"/>
    </location>
    <ligand>
        <name>substrate</name>
    </ligand>
</feature>
<feature type="binding site" evidence="1">
    <location>
        <position position="213"/>
    </location>
    <ligand>
        <name>substrate</name>
    </ligand>
</feature>
<feature type="binding site" evidence="1">
    <location>
        <begin position="234"/>
        <end position="235"/>
    </location>
    <ligand>
        <name>substrate</name>
    </ligand>
</feature>
<feature type="modified residue" description="Phosphoserine" evidence="1">
    <location>
        <position position="213"/>
    </location>
</feature>
<comment type="function">
    <text evidence="1">Involved in the gluconeogenesis. Catalyzes stereospecifically the conversion of dihydroxyacetone phosphate (DHAP) to D-glyceraldehyde-3-phosphate (G3P).</text>
</comment>
<comment type="catalytic activity">
    <reaction evidence="1">
        <text>D-glyceraldehyde 3-phosphate = dihydroxyacetone phosphate</text>
        <dbReference type="Rhea" id="RHEA:18585"/>
        <dbReference type="ChEBI" id="CHEBI:57642"/>
        <dbReference type="ChEBI" id="CHEBI:59776"/>
        <dbReference type="EC" id="5.3.1.1"/>
    </reaction>
</comment>
<comment type="pathway">
    <text evidence="1">Carbohydrate biosynthesis; gluconeogenesis.</text>
</comment>
<comment type="pathway">
    <text evidence="1">Carbohydrate degradation; glycolysis; D-glyceraldehyde 3-phosphate from glycerone phosphate: step 1/1.</text>
</comment>
<comment type="subunit">
    <text evidence="1">Homodimer.</text>
</comment>
<comment type="subcellular location">
    <subcellularLocation>
        <location evidence="1">Cytoplasm</location>
    </subcellularLocation>
</comment>
<comment type="similarity">
    <text evidence="1">Belongs to the triosephosphate isomerase family.</text>
</comment>
<keyword id="KW-0963">Cytoplasm</keyword>
<keyword id="KW-0312">Gluconeogenesis</keyword>
<keyword id="KW-0324">Glycolysis</keyword>
<keyword id="KW-0413">Isomerase</keyword>
<keyword id="KW-0597">Phosphoprotein</keyword>
<evidence type="ECO:0000255" key="1">
    <source>
        <dbReference type="HAMAP-Rule" id="MF_00147"/>
    </source>
</evidence>
<organism>
    <name type="scientific">Bacillus velezensis (strain DSM 23117 / BGSC 10A6 / LMG 26770 / FZB42)</name>
    <name type="common">Bacillus amyloliquefaciens subsp. plantarum</name>
    <dbReference type="NCBI Taxonomy" id="326423"/>
    <lineage>
        <taxon>Bacteria</taxon>
        <taxon>Bacillati</taxon>
        <taxon>Bacillota</taxon>
        <taxon>Bacilli</taxon>
        <taxon>Bacillales</taxon>
        <taxon>Bacillaceae</taxon>
        <taxon>Bacillus</taxon>
        <taxon>Bacillus amyloliquefaciens group</taxon>
    </lineage>
</organism>
<gene>
    <name evidence="1" type="primary">tpiA</name>
    <name type="ordered locus">RBAM_031280</name>
</gene>
<reference key="1">
    <citation type="journal article" date="2007" name="Nat. Biotechnol.">
        <title>Comparative analysis of the complete genome sequence of the plant growth-promoting bacterium Bacillus amyloliquefaciens FZB42.</title>
        <authorList>
            <person name="Chen X.H."/>
            <person name="Koumoutsi A."/>
            <person name="Scholz R."/>
            <person name="Eisenreich A."/>
            <person name="Schneider K."/>
            <person name="Heinemeyer I."/>
            <person name="Morgenstern B."/>
            <person name="Voss B."/>
            <person name="Hess W.R."/>
            <person name="Reva O."/>
            <person name="Junge H."/>
            <person name="Voigt B."/>
            <person name="Jungblut P.R."/>
            <person name="Vater J."/>
            <person name="Suessmuth R."/>
            <person name="Liesegang H."/>
            <person name="Strittmatter A."/>
            <person name="Gottschalk G."/>
            <person name="Borriss R."/>
        </authorList>
    </citation>
    <scope>NUCLEOTIDE SEQUENCE [LARGE SCALE GENOMIC DNA]</scope>
    <source>
        <strain>DSM 23117 / BGSC 10A6 / LMG 26770 / FZB42</strain>
    </source>
</reference>
<accession>A7Z8Y3</accession>
<proteinExistence type="inferred from homology"/>